<feature type="chain" id="PRO_0000310463" description="Ligand-dependent nuclear receptor corepressor-like protein">
    <location>
        <begin position="1"/>
        <end position="602"/>
    </location>
</feature>
<feature type="domain" description="HTH psq-type" evidence="2">
    <location>
        <begin position="516"/>
        <end position="568"/>
    </location>
</feature>
<feature type="DNA-binding region" description="H-T-H motif" evidence="2">
    <location>
        <begin position="544"/>
        <end position="564"/>
    </location>
</feature>
<feature type="region of interest" description="Disordered" evidence="3">
    <location>
        <begin position="104"/>
        <end position="124"/>
    </location>
</feature>
<feature type="region of interest" description="Disordered" evidence="3">
    <location>
        <begin position="495"/>
        <end position="521"/>
    </location>
</feature>
<feature type="region of interest" description="Disordered" evidence="3">
    <location>
        <begin position="564"/>
        <end position="602"/>
    </location>
</feature>
<feature type="compositionally biased region" description="Polar residues" evidence="3">
    <location>
        <begin position="106"/>
        <end position="124"/>
    </location>
</feature>
<feature type="compositionally biased region" description="Polar residues" evidence="3">
    <location>
        <begin position="585"/>
        <end position="602"/>
    </location>
</feature>
<feature type="cross-link" description="Glycyl lysine isopeptide (Lys-Gly) (interchain with G-Cter in SUMO2)" evidence="8">
    <location>
        <position position="242"/>
    </location>
</feature>
<feature type="cross-link" description="Glycyl lysine isopeptide (Lys-Gly) (interchain with G-Cter in SUMO2)" evidence="8">
    <location>
        <position position="319"/>
    </location>
</feature>
<feature type="cross-link" description="Glycyl lysine isopeptide (Lys-Gly) (interchain with G-Cter in SUMO2)" evidence="8">
    <location>
        <position position="340"/>
    </location>
</feature>
<feature type="cross-link" description="Glycyl lysine isopeptide (Lys-Gly) (interchain with G-Cter in SUMO2)" evidence="8">
    <location>
        <position position="397"/>
    </location>
</feature>
<feature type="splice variant" id="VSP_029287" description="In isoform 2." evidence="4">
    <location>
        <begin position="1"/>
        <end position="389"/>
    </location>
</feature>
<feature type="splice variant" id="VSP_029288" description="In isoform 3." evidence="5">
    <original>RLHRNREDYVERSAEFADGLLSKALKDIQSGALDINKAGILYGIPQKTLLLHLEALPAG</original>
    <variation>MLQVKTDEKLNVSDENTASCPLSPIKMCLNRPIEWNLNLTTASLTSCTVHNQNLKSEEK</variation>
    <location>
        <begin position="260"/>
        <end position="318"/>
    </location>
</feature>
<feature type="splice variant" id="VSP_029289" description="In isoform 3." evidence="5">
    <location>
        <begin position="319"/>
        <end position="602"/>
    </location>
</feature>
<feature type="sequence conflict" description="In Ref. 1; BAB70892." evidence="6" ref="1">
    <original>N</original>
    <variation>S</variation>
    <location>
        <position position="407"/>
    </location>
</feature>
<accession>Q8N3X6</accession>
<accession>Q96NK1</accession>
<keyword id="KW-0010">Activator</keyword>
<keyword id="KW-0025">Alternative splicing</keyword>
<keyword id="KW-0238">DNA-binding</keyword>
<keyword id="KW-1017">Isopeptide bond</keyword>
<keyword id="KW-0539">Nucleus</keyword>
<keyword id="KW-1267">Proteomics identification</keyword>
<keyword id="KW-1185">Reference proteome</keyword>
<keyword id="KW-0804">Transcription</keyword>
<keyword id="KW-0805">Transcription regulation</keyword>
<keyword id="KW-0832">Ubl conjugation</keyword>
<reference key="1">
    <citation type="journal article" date="2004" name="Nat. Genet.">
        <title>Complete sequencing and characterization of 21,243 full-length human cDNAs.</title>
        <authorList>
            <person name="Ota T."/>
            <person name="Suzuki Y."/>
            <person name="Nishikawa T."/>
            <person name="Otsuki T."/>
            <person name="Sugiyama T."/>
            <person name="Irie R."/>
            <person name="Wakamatsu A."/>
            <person name="Hayashi K."/>
            <person name="Sato H."/>
            <person name="Nagai K."/>
            <person name="Kimura K."/>
            <person name="Makita H."/>
            <person name="Sekine M."/>
            <person name="Obayashi M."/>
            <person name="Nishi T."/>
            <person name="Shibahara T."/>
            <person name="Tanaka T."/>
            <person name="Ishii S."/>
            <person name="Yamamoto J."/>
            <person name="Saito K."/>
            <person name="Kawai Y."/>
            <person name="Isono Y."/>
            <person name="Nakamura Y."/>
            <person name="Nagahari K."/>
            <person name="Murakami K."/>
            <person name="Yasuda T."/>
            <person name="Iwayanagi T."/>
            <person name="Wagatsuma M."/>
            <person name="Shiratori A."/>
            <person name="Sudo H."/>
            <person name="Hosoiri T."/>
            <person name="Kaku Y."/>
            <person name="Kodaira H."/>
            <person name="Kondo H."/>
            <person name="Sugawara M."/>
            <person name="Takahashi M."/>
            <person name="Kanda K."/>
            <person name="Yokoi T."/>
            <person name="Furuya T."/>
            <person name="Kikkawa E."/>
            <person name="Omura Y."/>
            <person name="Abe K."/>
            <person name="Kamihara K."/>
            <person name="Katsuta N."/>
            <person name="Sato K."/>
            <person name="Tanikawa M."/>
            <person name="Yamazaki M."/>
            <person name="Ninomiya K."/>
            <person name="Ishibashi T."/>
            <person name="Yamashita H."/>
            <person name="Murakawa K."/>
            <person name="Fujimori K."/>
            <person name="Tanai H."/>
            <person name="Kimata M."/>
            <person name="Watanabe M."/>
            <person name="Hiraoka S."/>
            <person name="Chiba Y."/>
            <person name="Ishida S."/>
            <person name="Ono Y."/>
            <person name="Takiguchi S."/>
            <person name="Watanabe S."/>
            <person name="Yosida M."/>
            <person name="Hotuta T."/>
            <person name="Kusano J."/>
            <person name="Kanehori K."/>
            <person name="Takahashi-Fujii A."/>
            <person name="Hara H."/>
            <person name="Tanase T.-O."/>
            <person name="Nomura Y."/>
            <person name="Togiya S."/>
            <person name="Komai F."/>
            <person name="Hara R."/>
            <person name="Takeuchi K."/>
            <person name="Arita M."/>
            <person name="Imose N."/>
            <person name="Musashino K."/>
            <person name="Yuuki H."/>
            <person name="Oshima A."/>
            <person name="Sasaki N."/>
            <person name="Aotsuka S."/>
            <person name="Yoshikawa Y."/>
            <person name="Matsunawa H."/>
            <person name="Ichihara T."/>
            <person name="Shiohata N."/>
            <person name="Sano S."/>
            <person name="Moriya S."/>
            <person name="Momiyama H."/>
            <person name="Satoh N."/>
            <person name="Takami S."/>
            <person name="Terashima Y."/>
            <person name="Suzuki O."/>
            <person name="Nakagawa S."/>
            <person name="Senoh A."/>
            <person name="Mizoguchi H."/>
            <person name="Goto Y."/>
            <person name="Shimizu F."/>
            <person name="Wakebe H."/>
            <person name="Hishigaki H."/>
            <person name="Watanabe T."/>
            <person name="Sugiyama A."/>
            <person name="Takemoto M."/>
            <person name="Kawakami B."/>
            <person name="Yamazaki M."/>
            <person name="Watanabe K."/>
            <person name="Kumagai A."/>
            <person name="Itakura S."/>
            <person name="Fukuzumi Y."/>
            <person name="Fujimori Y."/>
            <person name="Komiyama M."/>
            <person name="Tashiro H."/>
            <person name="Tanigami A."/>
            <person name="Fujiwara T."/>
            <person name="Ono T."/>
            <person name="Yamada K."/>
            <person name="Fujii Y."/>
            <person name="Ozaki K."/>
            <person name="Hirao M."/>
            <person name="Ohmori Y."/>
            <person name="Kawabata A."/>
            <person name="Hikiji T."/>
            <person name="Kobatake N."/>
            <person name="Inagaki H."/>
            <person name="Ikema Y."/>
            <person name="Okamoto S."/>
            <person name="Okitani R."/>
            <person name="Kawakami T."/>
            <person name="Noguchi S."/>
            <person name="Itoh T."/>
            <person name="Shigeta K."/>
            <person name="Senba T."/>
            <person name="Matsumura K."/>
            <person name="Nakajima Y."/>
            <person name="Mizuno T."/>
            <person name="Morinaga M."/>
            <person name="Sasaki M."/>
            <person name="Togashi T."/>
            <person name="Oyama M."/>
            <person name="Hata H."/>
            <person name="Watanabe M."/>
            <person name="Komatsu T."/>
            <person name="Mizushima-Sugano J."/>
            <person name="Satoh T."/>
            <person name="Shirai Y."/>
            <person name="Takahashi Y."/>
            <person name="Nakagawa K."/>
            <person name="Okumura K."/>
            <person name="Nagase T."/>
            <person name="Nomura N."/>
            <person name="Kikuchi H."/>
            <person name="Masuho Y."/>
            <person name="Yamashita R."/>
            <person name="Nakai K."/>
            <person name="Yada T."/>
            <person name="Nakamura Y."/>
            <person name="Ohara O."/>
            <person name="Isogai T."/>
            <person name="Sugano S."/>
        </authorList>
    </citation>
    <scope>NUCLEOTIDE SEQUENCE [LARGE SCALE MRNA] (ISOFORM 2)</scope>
    <source>
        <tissue>Brain</tissue>
    </source>
</reference>
<reference key="2">
    <citation type="journal article" date="2005" name="Nature">
        <title>Generation and annotation of the DNA sequences of human chromosomes 2 and 4.</title>
        <authorList>
            <person name="Hillier L.W."/>
            <person name="Graves T.A."/>
            <person name="Fulton R.S."/>
            <person name="Fulton L.A."/>
            <person name="Pepin K.H."/>
            <person name="Minx P."/>
            <person name="Wagner-McPherson C."/>
            <person name="Layman D."/>
            <person name="Wylie K."/>
            <person name="Sekhon M."/>
            <person name="Becker M.C."/>
            <person name="Fewell G.A."/>
            <person name="Delehaunty K.D."/>
            <person name="Miner T.L."/>
            <person name="Nash W.E."/>
            <person name="Kremitzki C."/>
            <person name="Oddy L."/>
            <person name="Du H."/>
            <person name="Sun H."/>
            <person name="Bradshaw-Cordum H."/>
            <person name="Ali J."/>
            <person name="Carter J."/>
            <person name="Cordes M."/>
            <person name="Harris A."/>
            <person name="Isak A."/>
            <person name="van Brunt A."/>
            <person name="Nguyen C."/>
            <person name="Du F."/>
            <person name="Courtney L."/>
            <person name="Kalicki J."/>
            <person name="Ozersky P."/>
            <person name="Abbott S."/>
            <person name="Armstrong J."/>
            <person name="Belter E.A."/>
            <person name="Caruso L."/>
            <person name="Cedroni M."/>
            <person name="Cotton M."/>
            <person name="Davidson T."/>
            <person name="Desai A."/>
            <person name="Elliott G."/>
            <person name="Erb T."/>
            <person name="Fronick C."/>
            <person name="Gaige T."/>
            <person name="Haakenson W."/>
            <person name="Haglund K."/>
            <person name="Holmes A."/>
            <person name="Harkins R."/>
            <person name="Kim K."/>
            <person name="Kruchowski S.S."/>
            <person name="Strong C.M."/>
            <person name="Grewal N."/>
            <person name="Goyea E."/>
            <person name="Hou S."/>
            <person name="Levy A."/>
            <person name="Martinka S."/>
            <person name="Mead K."/>
            <person name="McLellan M.D."/>
            <person name="Meyer R."/>
            <person name="Randall-Maher J."/>
            <person name="Tomlinson C."/>
            <person name="Dauphin-Kohlberg S."/>
            <person name="Kozlowicz-Reilly A."/>
            <person name="Shah N."/>
            <person name="Swearengen-Shahid S."/>
            <person name="Snider J."/>
            <person name="Strong J.T."/>
            <person name="Thompson J."/>
            <person name="Yoakum M."/>
            <person name="Leonard S."/>
            <person name="Pearman C."/>
            <person name="Trani L."/>
            <person name="Radionenko M."/>
            <person name="Waligorski J.E."/>
            <person name="Wang C."/>
            <person name="Rock S.M."/>
            <person name="Tin-Wollam A.-M."/>
            <person name="Maupin R."/>
            <person name="Latreille P."/>
            <person name="Wendl M.C."/>
            <person name="Yang S.-P."/>
            <person name="Pohl C."/>
            <person name="Wallis J.W."/>
            <person name="Spieth J."/>
            <person name="Bieri T.A."/>
            <person name="Berkowicz N."/>
            <person name="Nelson J.O."/>
            <person name="Osborne J."/>
            <person name="Ding L."/>
            <person name="Meyer R."/>
            <person name="Sabo A."/>
            <person name="Shotland Y."/>
            <person name="Sinha P."/>
            <person name="Wohldmann P.E."/>
            <person name="Cook L.L."/>
            <person name="Hickenbotham M.T."/>
            <person name="Eldred J."/>
            <person name="Williams D."/>
            <person name="Jones T.A."/>
            <person name="She X."/>
            <person name="Ciccarelli F.D."/>
            <person name="Izaurralde E."/>
            <person name="Taylor J."/>
            <person name="Schmutz J."/>
            <person name="Myers R.M."/>
            <person name="Cox D.R."/>
            <person name="Huang X."/>
            <person name="McPherson J.D."/>
            <person name="Mardis E.R."/>
            <person name="Clifton S.W."/>
            <person name="Warren W.C."/>
            <person name="Chinwalla A.T."/>
            <person name="Eddy S.R."/>
            <person name="Marra M.A."/>
            <person name="Ovcharenko I."/>
            <person name="Furey T.S."/>
            <person name="Miller W."/>
            <person name="Eichler E.E."/>
            <person name="Bork P."/>
            <person name="Suyama M."/>
            <person name="Torrents D."/>
            <person name="Waterston R.H."/>
            <person name="Wilson R.K."/>
        </authorList>
    </citation>
    <scope>NUCLEOTIDE SEQUENCE [LARGE SCALE GENOMIC DNA]</scope>
</reference>
<reference key="3">
    <citation type="submission" date="2005-07" db="EMBL/GenBank/DDBJ databases">
        <authorList>
            <person name="Mural R.J."/>
            <person name="Istrail S."/>
            <person name="Sutton G.G."/>
            <person name="Florea L."/>
            <person name="Halpern A.L."/>
            <person name="Mobarry C.M."/>
            <person name="Lippert R."/>
            <person name="Walenz B."/>
            <person name="Shatkay H."/>
            <person name="Dew I."/>
            <person name="Miller J.R."/>
            <person name="Flanigan M.J."/>
            <person name="Edwards N.J."/>
            <person name="Bolanos R."/>
            <person name="Fasulo D."/>
            <person name="Halldorsson B.V."/>
            <person name="Hannenhalli S."/>
            <person name="Turner R."/>
            <person name="Yooseph S."/>
            <person name="Lu F."/>
            <person name="Nusskern D.R."/>
            <person name="Shue B.C."/>
            <person name="Zheng X.H."/>
            <person name="Zhong F."/>
            <person name="Delcher A.L."/>
            <person name="Huson D.H."/>
            <person name="Kravitz S.A."/>
            <person name="Mouchard L."/>
            <person name="Reinert K."/>
            <person name="Remington K.A."/>
            <person name="Clark A.G."/>
            <person name="Waterman M.S."/>
            <person name="Eichler E.E."/>
            <person name="Adams M.D."/>
            <person name="Hunkapiller M.W."/>
            <person name="Myers E.W."/>
            <person name="Venter J.C."/>
        </authorList>
    </citation>
    <scope>NUCLEOTIDE SEQUENCE [LARGE SCALE GENOMIC DNA]</scope>
</reference>
<reference key="4">
    <citation type="journal article" date="2004" name="Genome Res.">
        <title>The status, quality, and expansion of the NIH full-length cDNA project: the Mammalian Gene Collection (MGC).</title>
        <authorList>
            <consortium name="The MGC Project Team"/>
        </authorList>
    </citation>
    <scope>NUCLEOTIDE SEQUENCE [LARGE SCALE MRNA] (ISOFORM 3)</scope>
    <source>
        <tissue>Brain</tissue>
    </source>
</reference>
<reference key="5">
    <citation type="journal article" date="2009" name="Mol. Cell. Proteomics">
        <title>A strategy for precise and large scale identification of core fucosylated glycoproteins.</title>
        <authorList>
            <person name="Jia W."/>
            <person name="Lu Z."/>
            <person name="Fu Y."/>
            <person name="Wang H.P."/>
            <person name="Wang L.H."/>
            <person name="Chi H."/>
            <person name="Yuan Z.F."/>
            <person name="Zheng Z.B."/>
            <person name="Song L.N."/>
            <person name="Han H.H."/>
            <person name="Liang Y.M."/>
            <person name="Wang J.L."/>
            <person name="Cai Y."/>
            <person name="Zhang Y.K."/>
            <person name="Deng Y.L."/>
            <person name="Ying W.T."/>
            <person name="He S.M."/>
            <person name="Qian X.H."/>
        </authorList>
    </citation>
    <scope>IDENTIFICATION</scope>
</reference>
<reference key="6">
    <citation type="journal article" date="2017" name="Nat. Struct. Mol. Biol.">
        <title>Site-specific mapping of the human SUMO proteome reveals co-modification with phosphorylation.</title>
        <authorList>
            <person name="Hendriks I.A."/>
            <person name="Lyon D."/>
            <person name="Young C."/>
            <person name="Jensen L.J."/>
            <person name="Vertegaal A.C."/>
            <person name="Nielsen M.L."/>
        </authorList>
    </citation>
    <scope>SUMOYLATION [LARGE SCALE ANALYSIS] AT LYS-242; LYS-319; LYS-340 AND LYS-397</scope>
    <scope>IDENTIFICATION BY MASS SPECTROMETRY [LARGE SCALE ANALYSIS]</scope>
</reference>
<protein>
    <recommendedName>
        <fullName>Ligand-dependent nuclear receptor corepressor-like protein</fullName>
        <shortName>LCoR-like protein</shortName>
    </recommendedName>
</protein>
<gene>
    <name type="primary">LCORL</name>
</gene>
<proteinExistence type="evidence at protein level"/>
<evidence type="ECO:0000250" key="1"/>
<evidence type="ECO:0000255" key="2">
    <source>
        <dbReference type="PROSITE-ProRule" id="PRU00320"/>
    </source>
</evidence>
<evidence type="ECO:0000256" key="3">
    <source>
        <dbReference type="SAM" id="MobiDB-lite"/>
    </source>
</evidence>
<evidence type="ECO:0000303" key="4">
    <source>
    </source>
</evidence>
<evidence type="ECO:0000303" key="5">
    <source>
    </source>
</evidence>
<evidence type="ECO:0000305" key="6"/>
<evidence type="ECO:0000305" key="7">
    <source>
    </source>
</evidence>
<evidence type="ECO:0007744" key="8">
    <source>
    </source>
</evidence>
<sequence length="602" mass="66964">MDKGRERMAAAAAAAAAAAAAAQCRSPRCAAERRGFRRELDSWRHRLMHCVGFESILEGLYGPRLRRDLSLFEDCEPEELTDWSMDEKCSFCNLQREAVSDCIPSLDSSQSTPTEELSSQGQSNTDKIECQAENYLNALFRKKDLPQNCDPNIPLVAQELMKKMIRQFAIEYISKSGKTQENRNGSIGPSIVCKSIQMNQAENSLQEEQEGPLDLTVNRMQEQNTQQGDGVLDLSTKKTSIKSEESSICDPSSENSVAGRLHRNREDYVERSAEFADGLLSKALKDIQSGALDINKAGILYGIPQKTLLLHLEALPAGKPASFKNKTRDFHDSYSYKDSKETCAVLQKVALWARAQAERTEKSKLNLLETSEIKFPTASTYLHQLTLQKMVTQFKEKNESLQYETSNPTVQLKIPQLRVSSVSKSQPDGSGLLDVMYQVSKTSSVLEGSALQKLKNILPKQNKIECSGPVTHSSVDSYFLHGDLSPLCLNSKNGTVDGTSENTEDGLDRKDSKQPRKKRGRYRQYDHEIMEEAIAMVMSGKMSVSKAQGIYGVPHSTLEYKVKERSGTLKTPPKKKLRLPDTGLYNMTDSGTGSCKNSSKPV</sequence>
<comment type="function">
    <text evidence="1">May act as transcription activator that binds DNA elements with the sequence 5'-CCCTATCGATCGATCTCTACCT-3'. May play a role in spermatogenesis (By similarity).</text>
</comment>
<comment type="interaction">
    <interactant intactId="EBI-7138654">
        <id>Q8N3X6</id>
    </interactant>
    <interactant intactId="EBI-908846">
        <id>Q13363</id>
        <label>CTBP1</label>
    </interactant>
    <organismsDiffer>false</organismsDiffer>
    <experiments>7</experiments>
</comment>
<comment type="interaction">
    <interactant intactId="EBI-7138654">
        <id>Q8N3X6</id>
    </interactant>
    <interactant intactId="EBI-1045155">
        <id>P43360</id>
        <label>MAGEA6</label>
    </interactant>
    <organismsDiffer>false</organismsDiffer>
    <experiments>3</experiments>
</comment>
<comment type="interaction">
    <interactant intactId="EBI-12111580">
        <id>Q8N3X6-3</id>
    </interactant>
    <interactant intactId="EBI-10171902">
        <id>P56545-3</id>
        <label>CTBP2</label>
    </interactant>
    <organismsDiffer>false</organismsDiffer>
    <experiments>3</experiments>
</comment>
<comment type="interaction">
    <interactant intactId="EBI-12111580">
        <id>Q8N3X6-3</id>
    </interactant>
    <interactant intactId="EBI-1045155">
        <id>P43360</id>
        <label>MAGEA6</label>
    </interactant>
    <organismsDiffer>false</organismsDiffer>
    <experiments>3</experiments>
</comment>
<comment type="subcellular location">
    <subcellularLocation>
        <location evidence="2">Nucleus</location>
    </subcellularLocation>
</comment>
<comment type="alternative products">
    <event type="alternative splicing"/>
    <isoform>
        <id>Q8N3X6-1</id>
        <name>1</name>
        <sequence type="displayed"/>
    </isoform>
    <isoform>
        <id>Q8N3X6-2</id>
        <name>2</name>
        <sequence type="described" ref="VSP_029287"/>
    </isoform>
    <isoform>
        <id>Q8N3X6-3</id>
        <name>3</name>
        <sequence type="described" ref="VSP_029288 VSP_029289"/>
    </isoform>
</comment>
<comment type="caution">
    <text evidence="7">A report observed N-glycosylation at Asn-493 (PubMed:19139490). However, as the protein is predicted to act as a DNA-binding transcription activator, additional evidence is required to confirm this result.</text>
</comment>
<dbReference type="EMBL" id="AK055258">
    <property type="protein sequence ID" value="BAB70892.1"/>
    <property type="molecule type" value="mRNA"/>
</dbReference>
<dbReference type="EMBL" id="AC005768">
    <property type="status" value="NOT_ANNOTATED_CDS"/>
    <property type="molecule type" value="Genomic_DNA"/>
</dbReference>
<dbReference type="EMBL" id="AC079399">
    <property type="status" value="NOT_ANNOTATED_CDS"/>
    <property type="molecule type" value="Genomic_DNA"/>
</dbReference>
<dbReference type="EMBL" id="CH471069">
    <property type="protein sequence ID" value="EAW92786.1"/>
    <property type="molecule type" value="Genomic_DNA"/>
</dbReference>
<dbReference type="EMBL" id="BC037322">
    <property type="protein sequence ID" value="AAH37322.3"/>
    <property type="molecule type" value="mRNA"/>
</dbReference>
<dbReference type="CCDS" id="CCDS3425.1">
    <molecule id="Q8N3X6-3"/>
</dbReference>
<dbReference type="CCDS" id="CCDS54749.1">
    <molecule id="Q8N3X6-1"/>
</dbReference>
<dbReference type="RefSeq" id="NP_001159611.1">
    <molecule id="Q8N3X6-1"/>
    <property type="nucleotide sequence ID" value="NM_001166139.2"/>
</dbReference>
<dbReference type="RefSeq" id="NP_710153.2">
    <molecule id="Q8N3X6-3"/>
    <property type="nucleotide sequence ID" value="NM_153686.8"/>
</dbReference>
<dbReference type="SMR" id="Q8N3X6"/>
<dbReference type="BioGRID" id="129025">
    <property type="interactions" value="14"/>
</dbReference>
<dbReference type="FunCoup" id="Q8N3X6">
    <property type="interactions" value="1200"/>
</dbReference>
<dbReference type="IntAct" id="Q8N3X6">
    <property type="interactions" value="6"/>
</dbReference>
<dbReference type="MINT" id="Q8N3X6"/>
<dbReference type="STRING" id="9606.ENSP00000371661"/>
<dbReference type="GlyConnect" id="2054">
    <property type="glycosylation" value="1 N-Linked glycan (1 site)"/>
</dbReference>
<dbReference type="GlyCosmos" id="Q8N3X6">
    <property type="glycosylation" value="1 site, 2 glycans"/>
</dbReference>
<dbReference type="GlyGen" id="Q8N3X6">
    <property type="glycosylation" value="1 site, 2 N-linked glycans (1 site)"/>
</dbReference>
<dbReference type="iPTMnet" id="Q8N3X6"/>
<dbReference type="PhosphoSitePlus" id="Q8N3X6"/>
<dbReference type="BioMuta" id="LCORL"/>
<dbReference type="DMDM" id="160395582"/>
<dbReference type="jPOST" id="Q8N3X6"/>
<dbReference type="MassIVE" id="Q8N3X6"/>
<dbReference type="PaxDb" id="9606-ENSP00000371661"/>
<dbReference type="PeptideAtlas" id="Q8N3X6"/>
<dbReference type="ProteomicsDB" id="71844">
    <molecule id="Q8N3X6-1"/>
</dbReference>
<dbReference type="ProteomicsDB" id="71845">
    <molecule id="Q8N3X6-2"/>
</dbReference>
<dbReference type="ProteomicsDB" id="71846">
    <molecule id="Q8N3X6-3"/>
</dbReference>
<dbReference type="Antibodypedia" id="23115">
    <property type="antibodies" value="132 antibodies from 22 providers"/>
</dbReference>
<dbReference type="DNASU" id="254251"/>
<dbReference type="Ensembl" id="ENST00000326877.8">
    <molecule id="Q8N3X6-3"/>
    <property type="protein sequence ID" value="ENSP00000317566.3"/>
    <property type="gene ID" value="ENSG00000178177.17"/>
</dbReference>
<dbReference type="Ensembl" id="ENST00000382226.5">
    <molecule id="Q8N3X6-1"/>
    <property type="protein sequence ID" value="ENSP00000371661.5"/>
    <property type="gene ID" value="ENSG00000178177.17"/>
</dbReference>
<dbReference type="GeneID" id="254251"/>
<dbReference type="KEGG" id="hsa:254251"/>
<dbReference type="UCSC" id="uc003gpq.4">
    <molecule id="Q8N3X6-1"/>
    <property type="organism name" value="human"/>
</dbReference>
<dbReference type="AGR" id="HGNC:30776"/>
<dbReference type="CTD" id="254251"/>
<dbReference type="DisGeNET" id="254251"/>
<dbReference type="GeneCards" id="LCORL"/>
<dbReference type="HGNC" id="HGNC:30776">
    <property type="gene designation" value="LCORL"/>
</dbReference>
<dbReference type="HPA" id="ENSG00000178177">
    <property type="expression patterns" value="Low tissue specificity"/>
</dbReference>
<dbReference type="MIM" id="611799">
    <property type="type" value="gene"/>
</dbReference>
<dbReference type="neXtProt" id="NX_Q8N3X6"/>
<dbReference type="OpenTargets" id="ENSG00000178177"/>
<dbReference type="PharmGKB" id="PA145148507"/>
<dbReference type="VEuPathDB" id="HostDB:ENSG00000178177"/>
<dbReference type="eggNOG" id="KOG4565">
    <property type="taxonomic scope" value="Eukaryota"/>
</dbReference>
<dbReference type="GeneTree" id="ENSGT00940000154965"/>
<dbReference type="HOGENOM" id="CLU_076618_1_0_1"/>
<dbReference type="InParanoid" id="Q8N3X6"/>
<dbReference type="OMA" id="SLQYETH"/>
<dbReference type="OrthoDB" id="10028342at2759"/>
<dbReference type="PAN-GO" id="Q8N3X6">
    <property type="GO annotations" value="2 GO annotations based on evolutionary models"/>
</dbReference>
<dbReference type="PhylomeDB" id="Q8N3X6"/>
<dbReference type="TreeFam" id="TF319589"/>
<dbReference type="PathwayCommons" id="Q8N3X6"/>
<dbReference type="SignaLink" id="Q8N3X6"/>
<dbReference type="BioGRID-ORCS" id="254251">
    <property type="hits" value="6 hits in 1178 CRISPR screens"/>
</dbReference>
<dbReference type="ChiTaRS" id="LCORL">
    <property type="organism name" value="human"/>
</dbReference>
<dbReference type="GenomeRNAi" id="254251"/>
<dbReference type="Pharos" id="Q8N3X6">
    <property type="development level" value="Tbio"/>
</dbReference>
<dbReference type="PRO" id="PR:Q8N3X6"/>
<dbReference type="Proteomes" id="UP000005640">
    <property type="component" value="Chromosome 4"/>
</dbReference>
<dbReference type="RNAct" id="Q8N3X6">
    <property type="molecule type" value="protein"/>
</dbReference>
<dbReference type="Bgee" id="ENSG00000178177">
    <property type="expression patterns" value="Expressed in buccal mucosa cell and 184 other cell types or tissues"/>
</dbReference>
<dbReference type="ExpressionAtlas" id="Q8N3X6">
    <property type="expression patterns" value="baseline and differential"/>
</dbReference>
<dbReference type="GO" id="GO:0005634">
    <property type="term" value="C:nucleus"/>
    <property type="evidence" value="ECO:0000318"/>
    <property type="project" value="GO_Central"/>
</dbReference>
<dbReference type="GO" id="GO:0003677">
    <property type="term" value="F:DNA binding"/>
    <property type="evidence" value="ECO:0007669"/>
    <property type="project" value="UniProtKB-KW"/>
</dbReference>
<dbReference type="GO" id="GO:1990226">
    <property type="term" value="F:histone methyltransferase binding"/>
    <property type="evidence" value="ECO:0000353"/>
    <property type="project" value="ARUK-UCL"/>
</dbReference>
<dbReference type="GO" id="GO:0006357">
    <property type="term" value="P:regulation of transcription by RNA polymerase II"/>
    <property type="evidence" value="ECO:0000318"/>
    <property type="project" value="GO_Central"/>
</dbReference>
<dbReference type="FunFam" id="1.10.10.60:FF:000019">
    <property type="entry name" value="Ligand-dependent corepressor isoform 1"/>
    <property type="match status" value="1"/>
</dbReference>
<dbReference type="Gene3D" id="1.10.10.60">
    <property type="entry name" value="Homeodomain-like"/>
    <property type="match status" value="2"/>
</dbReference>
<dbReference type="InterPro" id="IPR009057">
    <property type="entry name" value="Homeodomain-like_sf"/>
</dbReference>
<dbReference type="InterPro" id="IPR007889">
    <property type="entry name" value="HTH_Psq"/>
</dbReference>
<dbReference type="PANTHER" id="PTHR21545:SF10">
    <property type="entry name" value="LIGAND-DEPENDENT NUCLEAR RECEPTOR COREPRESSOR-LIKE PROTEIN"/>
    <property type="match status" value="1"/>
</dbReference>
<dbReference type="PANTHER" id="PTHR21545">
    <property type="entry name" value="TRANSCRIPTION FACTOR MLR1/2"/>
    <property type="match status" value="1"/>
</dbReference>
<dbReference type="Pfam" id="PF05225">
    <property type="entry name" value="HTH_psq"/>
    <property type="match status" value="2"/>
</dbReference>
<dbReference type="SUPFAM" id="SSF46689">
    <property type="entry name" value="Homeodomain-like"/>
    <property type="match status" value="2"/>
</dbReference>
<dbReference type="PROSITE" id="PS50960">
    <property type="entry name" value="HTH_PSQ"/>
    <property type="match status" value="1"/>
</dbReference>
<organism>
    <name type="scientific">Homo sapiens</name>
    <name type="common">Human</name>
    <dbReference type="NCBI Taxonomy" id="9606"/>
    <lineage>
        <taxon>Eukaryota</taxon>
        <taxon>Metazoa</taxon>
        <taxon>Chordata</taxon>
        <taxon>Craniata</taxon>
        <taxon>Vertebrata</taxon>
        <taxon>Euteleostomi</taxon>
        <taxon>Mammalia</taxon>
        <taxon>Eutheria</taxon>
        <taxon>Euarchontoglires</taxon>
        <taxon>Primates</taxon>
        <taxon>Haplorrhini</taxon>
        <taxon>Catarrhini</taxon>
        <taxon>Hominidae</taxon>
        <taxon>Homo</taxon>
    </lineage>
</organism>
<name>LCORL_HUMAN</name>